<feature type="chain" id="PRO_1000065252" description="UPF0294 protein Ent638_0743">
    <location>
        <begin position="1"/>
        <end position="266"/>
    </location>
</feature>
<sequence>MRKNTYAMRYIAGQPAERILPPGSFASIGQALPAGAPLSSDEKIRVLVWNIFKQQRAEWLSVLKNFGKDAHLVLLQEAQTTPELVRFATTNYLAADQVPAFVLPQHPSGVMTLSAAHPVYCCPLREREPILRLAKSALVTVYPLPDTRLLMVVNIHAVNFSLGVDVYSKQLLPIGDQIAHHSGPIIMAGDFNAWSRPRMNALYRFAREMSLREVRFTDDQRRKAFGRPLDFVFYRGLNVHEASVLVTRASDHNPLLVEFSPGKPDK</sequence>
<evidence type="ECO:0000255" key="1">
    <source>
        <dbReference type="HAMAP-Rule" id="MF_01119"/>
    </source>
</evidence>
<name>Y743_ENT38</name>
<keyword id="KW-0963">Cytoplasm</keyword>
<organism>
    <name type="scientific">Enterobacter sp. (strain 638)</name>
    <dbReference type="NCBI Taxonomy" id="399742"/>
    <lineage>
        <taxon>Bacteria</taxon>
        <taxon>Pseudomonadati</taxon>
        <taxon>Pseudomonadota</taxon>
        <taxon>Gammaproteobacteria</taxon>
        <taxon>Enterobacterales</taxon>
        <taxon>Enterobacteriaceae</taxon>
        <taxon>Enterobacter</taxon>
    </lineage>
</organism>
<gene>
    <name type="ordered locus">Ent638_0743</name>
</gene>
<protein>
    <recommendedName>
        <fullName evidence="1">UPF0294 protein Ent638_0743</fullName>
    </recommendedName>
</protein>
<reference key="1">
    <citation type="journal article" date="2010" name="PLoS Genet.">
        <title>Genome sequence of the plant growth promoting endophytic bacterium Enterobacter sp. 638.</title>
        <authorList>
            <person name="Taghavi S."/>
            <person name="van der Lelie D."/>
            <person name="Hoffman A."/>
            <person name="Zhang Y.B."/>
            <person name="Walla M.D."/>
            <person name="Vangronsveld J."/>
            <person name="Newman L."/>
            <person name="Monchy S."/>
        </authorList>
    </citation>
    <scope>NUCLEOTIDE SEQUENCE [LARGE SCALE GENOMIC DNA]</scope>
    <source>
        <strain>638</strain>
    </source>
</reference>
<proteinExistence type="inferred from homology"/>
<accession>A4W6U9</accession>
<comment type="subcellular location">
    <subcellularLocation>
        <location evidence="1">Cytoplasm</location>
    </subcellularLocation>
</comment>
<comment type="similarity">
    <text evidence="1">Belongs to the UPF0294 family.</text>
</comment>
<dbReference type="EMBL" id="CP000653">
    <property type="protein sequence ID" value="ABP59429.1"/>
    <property type="molecule type" value="Genomic_DNA"/>
</dbReference>
<dbReference type="RefSeq" id="WP_012016150.1">
    <property type="nucleotide sequence ID" value="NC_009436.1"/>
</dbReference>
<dbReference type="SMR" id="A4W6U9"/>
<dbReference type="STRING" id="399742.Ent638_0743"/>
<dbReference type="GeneID" id="93307920"/>
<dbReference type="KEGG" id="ent:Ent638_0743"/>
<dbReference type="eggNOG" id="COG3021">
    <property type="taxonomic scope" value="Bacteria"/>
</dbReference>
<dbReference type="HOGENOM" id="CLU_083563_0_0_6"/>
<dbReference type="OrthoDB" id="9793162at2"/>
<dbReference type="Proteomes" id="UP000000230">
    <property type="component" value="Chromosome"/>
</dbReference>
<dbReference type="GO" id="GO:0005737">
    <property type="term" value="C:cytoplasm"/>
    <property type="evidence" value="ECO:0007669"/>
    <property type="project" value="UniProtKB-SubCell"/>
</dbReference>
<dbReference type="GO" id="GO:0003824">
    <property type="term" value="F:catalytic activity"/>
    <property type="evidence" value="ECO:0007669"/>
    <property type="project" value="InterPro"/>
</dbReference>
<dbReference type="Gene3D" id="3.60.10.10">
    <property type="entry name" value="Endonuclease/exonuclease/phosphatase"/>
    <property type="match status" value="1"/>
</dbReference>
<dbReference type="HAMAP" id="MF_01119">
    <property type="entry name" value="UPF0294"/>
    <property type="match status" value="1"/>
</dbReference>
<dbReference type="InterPro" id="IPR036691">
    <property type="entry name" value="Endo/exonu/phosph_ase_sf"/>
</dbReference>
<dbReference type="InterPro" id="IPR005135">
    <property type="entry name" value="Endo/exonuclease/phosphatase"/>
</dbReference>
<dbReference type="InterPro" id="IPR022958">
    <property type="entry name" value="UPF0294"/>
</dbReference>
<dbReference type="NCBIfam" id="NF003839">
    <property type="entry name" value="PRK05421.1-1"/>
    <property type="match status" value="1"/>
</dbReference>
<dbReference type="NCBIfam" id="NF003840">
    <property type="entry name" value="PRK05421.1-2"/>
    <property type="match status" value="1"/>
</dbReference>
<dbReference type="NCBIfam" id="NF003841">
    <property type="entry name" value="PRK05421.1-3"/>
    <property type="match status" value="1"/>
</dbReference>
<dbReference type="NCBIfam" id="NF003842">
    <property type="entry name" value="PRK05421.1-4"/>
    <property type="match status" value="1"/>
</dbReference>
<dbReference type="Pfam" id="PF03372">
    <property type="entry name" value="Exo_endo_phos"/>
    <property type="match status" value="1"/>
</dbReference>
<dbReference type="SUPFAM" id="SSF56219">
    <property type="entry name" value="DNase I-like"/>
    <property type="match status" value="1"/>
</dbReference>